<organism>
    <name type="scientific">Amborella trichopoda</name>
    <dbReference type="NCBI Taxonomy" id="13333"/>
    <lineage>
        <taxon>Eukaryota</taxon>
        <taxon>Viridiplantae</taxon>
        <taxon>Streptophyta</taxon>
        <taxon>Embryophyta</taxon>
        <taxon>Tracheophyta</taxon>
        <taxon>Spermatophyta</taxon>
        <taxon>Magnoliopsida</taxon>
        <taxon>Amborellales</taxon>
        <taxon>Amborellaceae</taxon>
        <taxon>Amborella</taxon>
    </lineage>
</organism>
<sequence length="1072" mass="120930">MLRDGNEGMSTIPGFSQIQFEGFCRFVDQGLAEELHKFPKIEDTDQEIEFQLLVETYQLAEPLIKERDAVYESLTHSSELYVPAGLIWKVGRDMQEQTVFIGNIPLMNSLGTFIVNGIYRIVINQILQSPGIYYSSELDHNGISVYTGTIISDRGGRSELEIDRKARIWARVSRKQKISILVLPSAMGSNLREILDNVCYPEILLYFPNEKEKKKIGSKENAILEFYQQFSCVGGDPVFSESLCKELQKRFFQQRCELGRIGRQNMNQRLNIDIPQNNTFLLPRDVLAATDHLIGMKFGMGTLDDMNHLKNKRIRSVADLLQDQFGLALVRLENVVRGTICGAIRHKFIPTPQNLVTSTPLTTTYESFFGLHPLSQVLDRTNPLTQIVHGRKSSYLGPGGLTGRTASFRIRDIHPSHYGRICPIDTSEGINVGLIGSLAIHARIGDWGSIRSPFYEISERSKEEQMVYLSPRRDEYYMVMVAAGNSLALNQDIQDEQVVPARYRQEFVTIAWEHIDLRSIYPLQYFSIGASLIPFIEHNDANRALMSSNMQRQAVPLSRSEKCIVGTGLERQAALDSGGSAIAQHEGKVIYTDTEKILLSGNGDTISIPLLMYQRSNKNTCMHQKPQVHRDKYVKKGQVLADGAATVGGELALGKNVLVAHMPWEGYNFEDAVLISERLVYGDIYTSFHIRKYEIQTHVTSHGPEKITNEIPHLEAHLLRNLDRNGIVMLGSWVETGDVLVGKLTPQTAKESSYAPEDRLLRVILGIQVSTAKETCLKLPIGGRGRVIDVRWIQKKGASSYNPEKIRVYISQKREIKVGDKVAGRHGNKGIISKILPRQDMPYLQDGTPVDMVFNPLGVPSRMNVGQIFECSLGLAGDLLDRHYRITPFDERYEQEASRKLVFPELYEASKRTANPWVFEPEYPGKSRIFDGRTGDPFEQPVIIGKSYMLKLIHQVDDKIHGRSSGHYALVTQQPLRGRAKQGGQRVGEMEVWALEGFGVAHILQEMLTYKSDHIRARQELLGTTIVGGTIPKPEGAPESFRLLVRELRSLALELKHFLVSEKNFQINRKEA</sequence>
<comment type="function">
    <text evidence="1">DNA-dependent RNA polymerase catalyzes the transcription of DNA into RNA using the four ribonucleoside triphosphates as substrates.</text>
</comment>
<comment type="catalytic activity">
    <reaction evidence="1">
        <text>RNA(n) + a ribonucleoside 5'-triphosphate = RNA(n+1) + diphosphate</text>
        <dbReference type="Rhea" id="RHEA:21248"/>
        <dbReference type="Rhea" id="RHEA-COMP:14527"/>
        <dbReference type="Rhea" id="RHEA-COMP:17342"/>
        <dbReference type="ChEBI" id="CHEBI:33019"/>
        <dbReference type="ChEBI" id="CHEBI:61557"/>
        <dbReference type="ChEBI" id="CHEBI:140395"/>
        <dbReference type="EC" id="2.7.7.6"/>
    </reaction>
</comment>
<comment type="subunit">
    <text evidence="1">In plastids the minimal PEP RNA polymerase catalytic core is composed of four subunits: alpha, beta, beta', and beta''. When a (nuclear-encoded) sigma factor is associated with the core the holoenzyme is formed, which can initiate transcription.</text>
</comment>
<comment type="subcellular location">
    <subcellularLocation>
        <location>Plastid</location>
        <location>Chloroplast</location>
    </subcellularLocation>
</comment>
<comment type="similarity">
    <text evidence="1">Belongs to the RNA polymerase beta chain family.</text>
</comment>
<comment type="sequence caution" evidence="2">
    <conflict type="erroneous initiation">
        <sequence resource="EMBL-CDS" id="CAD45099"/>
    </conflict>
</comment>
<evidence type="ECO:0000255" key="1">
    <source>
        <dbReference type="HAMAP-Rule" id="MF_01321"/>
    </source>
</evidence>
<evidence type="ECO:0000305" key="2"/>
<feature type="chain" id="PRO_0000048009" description="DNA-directed RNA polymerase subunit beta">
    <location>
        <begin position="1"/>
        <end position="1072"/>
    </location>
</feature>
<gene>
    <name evidence="1" type="primary">rpoB</name>
</gene>
<dbReference type="EC" id="2.7.7.6" evidence="1"/>
<dbReference type="EMBL" id="AJ506156">
    <property type="protein sequence ID" value="CAD45099.1"/>
    <property type="status" value="ALT_INIT"/>
    <property type="molecule type" value="Genomic_DNA"/>
</dbReference>
<dbReference type="RefSeq" id="NP_904091.2">
    <property type="nucleotide sequence ID" value="NC_005086.1"/>
</dbReference>
<dbReference type="SMR" id="P60282"/>
<dbReference type="STRING" id="13333.P60282"/>
<dbReference type="GeneID" id="2546588"/>
<dbReference type="KEGG" id="atr:2546588"/>
<dbReference type="eggNOG" id="KOG0214">
    <property type="taxonomic scope" value="Eukaryota"/>
</dbReference>
<dbReference type="OrthoDB" id="1927092at2759"/>
<dbReference type="Proteomes" id="UP000017836">
    <property type="component" value="Chloroplast"/>
</dbReference>
<dbReference type="GO" id="GO:0009507">
    <property type="term" value="C:chloroplast"/>
    <property type="evidence" value="ECO:0007669"/>
    <property type="project" value="UniProtKB-SubCell"/>
</dbReference>
<dbReference type="GO" id="GO:0000428">
    <property type="term" value="C:DNA-directed RNA polymerase complex"/>
    <property type="evidence" value="ECO:0007669"/>
    <property type="project" value="UniProtKB-KW"/>
</dbReference>
<dbReference type="GO" id="GO:0005739">
    <property type="term" value="C:mitochondrion"/>
    <property type="evidence" value="ECO:0007669"/>
    <property type="project" value="GOC"/>
</dbReference>
<dbReference type="GO" id="GO:0003677">
    <property type="term" value="F:DNA binding"/>
    <property type="evidence" value="ECO:0007669"/>
    <property type="project" value="UniProtKB-UniRule"/>
</dbReference>
<dbReference type="GO" id="GO:0003899">
    <property type="term" value="F:DNA-directed RNA polymerase activity"/>
    <property type="evidence" value="ECO:0007669"/>
    <property type="project" value="UniProtKB-UniRule"/>
</dbReference>
<dbReference type="GO" id="GO:0032549">
    <property type="term" value="F:ribonucleoside binding"/>
    <property type="evidence" value="ECO:0007669"/>
    <property type="project" value="InterPro"/>
</dbReference>
<dbReference type="GO" id="GO:0006351">
    <property type="term" value="P:DNA-templated transcription"/>
    <property type="evidence" value="ECO:0007669"/>
    <property type="project" value="UniProtKB-UniRule"/>
</dbReference>
<dbReference type="CDD" id="cd00653">
    <property type="entry name" value="RNA_pol_B_RPB2"/>
    <property type="match status" value="1"/>
</dbReference>
<dbReference type="Gene3D" id="2.40.50.100">
    <property type="match status" value="1"/>
</dbReference>
<dbReference type="Gene3D" id="2.40.50.150">
    <property type="match status" value="1"/>
</dbReference>
<dbReference type="Gene3D" id="3.90.1100.10">
    <property type="match status" value="1"/>
</dbReference>
<dbReference type="Gene3D" id="2.30.150.10">
    <property type="entry name" value="DNA-directed RNA polymerase, beta subunit, external 1 domain"/>
    <property type="match status" value="1"/>
</dbReference>
<dbReference type="Gene3D" id="2.40.270.10">
    <property type="entry name" value="DNA-directed RNA polymerase, subunit 2, domain 6"/>
    <property type="match status" value="1"/>
</dbReference>
<dbReference type="Gene3D" id="3.90.1800.10">
    <property type="entry name" value="RNA polymerase alpha subunit dimerisation domain"/>
    <property type="match status" value="1"/>
</dbReference>
<dbReference type="Gene3D" id="3.90.1110.10">
    <property type="entry name" value="RNA polymerase Rpb2, domain 2"/>
    <property type="match status" value="1"/>
</dbReference>
<dbReference type="HAMAP" id="MF_01321">
    <property type="entry name" value="RNApol_bact_RpoB"/>
    <property type="match status" value="1"/>
</dbReference>
<dbReference type="InterPro" id="IPR042107">
    <property type="entry name" value="DNA-dir_RNA_pol_bsu_ext_1_sf"/>
</dbReference>
<dbReference type="InterPro" id="IPR015712">
    <property type="entry name" value="DNA-dir_RNA_pol_su2"/>
</dbReference>
<dbReference type="InterPro" id="IPR007120">
    <property type="entry name" value="DNA-dir_RNAP_su2_dom"/>
</dbReference>
<dbReference type="InterPro" id="IPR037033">
    <property type="entry name" value="DNA-dir_RNAP_su2_hyb_sf"/>
</dbReference>
<dbReference type="InterPro" id="IPR010243">
    <property type="entry name" value="RNA_pol_bsu_bac"/>
</dbReference>
<dbReference type="InterPro" id="IPR007121">
    <property type="entry name" value="RNA_pol_bsu_CS"/>
</dbReference>
<dbReference type="InterPro" id="IPR007642">
    <property type="entry name" value="RNA_pol_Rpb2_2"/>
</dbReference>
<dbReference type="InterPro" id="IPR037034">
    <property type="entry name" value="RNA_pol_Rpb2_2_sf"/>
</dbReference>
<dbReference type="InterPro" id="IPR007645">
    <property type="entry name" value="RNA_pol_Rpb2_3"/>
</dbReference>
<dbReference type="InterPro" id="IPR007641">
    <property type="entry name" value="RNA_pol_Rpb2_7"/>
</dbReference>
<dbReference type="InterPro" id="IPR014724">
    <property type="entry name" value="RNA_pol_RPB2_OB-fold"/>
</dbReference>
<dbReference type="NCBIfam" id="NF001616">
    <property type="entry name" value="PRK00405.1"/>
    <property type="match status" value="1"/>
</dbReference>
<dbReference type="PANTHER" id="PTHR20856">
    <property type="entry name" value="DNA-DIRECTED RNA POLYMERASE I SUBUNIT 2"/>
    <property type="match status" value="1"/>
</dbReference>
<dbReference type="Pfam" id="PF04561">
    <property type="entry name" value="RNA_pol_Rpb2_2"/>
    <property type="match status" value="1"/>
</dbReference>
<dbReference type="Pfam" id="PF04565">
    <property type="entry name" value="RNA_pol_Rpb2_3"/>
    <property type="match status" value="1"/>
</dbReference>
<dbReference type="Pfam" id="PF00562">
    <property type="entry name" value="RNA_pol_Rpb2_6"/>
    <property type="match status" value="1"/>
</dbReference>
<dbReference type="Pfam" id="PF04560">
    <property type="entry name" value="RNA_pol_Rpb2_7"/>
    <property type="match status" value="1"/>
</dbReference>
<dbReference type="SUPFAM" id="SSF64484">
    <property type="entry name" value="beta and beta-prime subunits of DNA dependent RNA-polymerase"/>
    <property type="match status" value="1"/>
</dbReference>
<dbReference type="PROSITE" id="PS01166">
    <property type="entry name" value="RNA_POL_BETA"/>
    <property type="match status" value="1"/>
</dbReference>
<geneLocation type="chloroplast"/>
<protein>
    <recommendedName>
        <fullName evidence="1">DNA-directed RNA polymerase subunit beta</fullName>
        <ecNumber evidence="1">2.7.7.6</ecNumber>
    </recommendedName>
    <alternativeName>
        <fullName evidence="1">PEP</fullName>
    </alternativeName>
    <alternativeName>
        <fullName evidence="1">Plastid-encoded RNA polymerase subunit beta</fullName>
        <shortName evidence="1">RNA polymerase subunit beta</shortName>
    </alternativeName>
</protein>
<keyword id="KW-0150">Chloroplast</keyword>
<keyword id="KW-0240">DNA-directed RNA polymerase</keyword>
<keyword id="KW-0548">Nucleotidyltransferase</keyword>
<keyword id="KW-0934">Plastid</keyword>
<keyword id="KW-1185">Reference proteome</keyword>
<keyword id="KW-0804">Transcription</keyword>
<keyword id="KW-0808">Transferase</keyword>
<proteinExistence type="inferred from homology"/>
<accession>P60282</accession>
<name>RPOB_AMBTC</name>
<reference key="1">
    <citation type="journal article" date="2003" name="Mol. Biol. Evol.">
        <title>Analysis of the Amborella trichopoda chloroplast genome sequence suggests that Amborella is not a basal angiosperm.</title>
        <authorList>
            <person name="Goremykin V.V."/>
            <person name="Hirsch-Ernst K.I."/>
            <person name="Wolfl S."/>
            <person name="Hellwig F.H."/>
        </authorList>
    </citation>
    <scope>NUCLEOTIDE SEQUENCE [LARGE SCALE GENOMIC DNA]</scope>
</reference>